<sequence>MADGKAGEEKPEKPQRAGAAGGPEEEAEKPVKTKTVSSSNGGESSSRSAEKRSAEDEAADLPTKPTKMSKFGFAIGSQTARKASAISIRLGASKPKETVPTLAPKTLSVAAAFNEDEDSEPEEMPPEAKMRMKNIGRDTPTSAGPNSFNKGKHGFSDNQKLWERNIKSHLGNVHDQDN</sequence>
<protein>
    <recommendedName>
        <fullName>PEST proteolytic signal-containing nuclear protein</fullName>
        <shortName>PCNP</shortName>
        <shortName>PEST-containing nuclear protein</shortName>
    </recommendedName>
</protein>
<reference key="1">
    <citation type="journal article" date="2004" name="Genome Res.">
        <title>The status, quality, and expansion of the NIH full-length cDNA project: the Mammalian Gene Collection (MGC).</title>
        <authorList>
            <consortium name="The MGC Project Team"/>
        </authorList>
    </citation>
    <scope>NUCLEOTIDE SEQUENCE [LARGE SCALE MRNA]</scope>
    <source>
        <tissue>Brain</tissue>
    </source>
</reference>
<reference key="2">
    <citation type="journal article" date="2009" name="Mol. Cell. Proteomics">
        <title>Large scale localization of protein phosphorylation by use of electron capture dissociation mass spectrometry.</title>
        <authorList>
            <person name="Sweet S.M."/>
            <person name="Bailey C.M."/>
            <person name="Cunningham D.L."/>
            <person name="Heath J.K."/>
            <person name="Cooper H.J."/>
        </authorList>
    </citation>
    <scope>PHOSPHORYLATION [LARGE SCALE ANALYSIS] AT SER-119</scope>
    <scope>IDENTIFICATION BY MASS SPECTROMETRY [LARGE SCALE ANALYSIS]</scope>
    <source>
        <tissue>Embryonic fibroblast</tissue>
    </source>
</reference>
<reference key="3">
    <citation type="journal article" date="2010" name="Cell">
        <title>A tissue-specific atlas of mouse protein phosphorylation and expression.</title>
        <authorList>
            <person name="Huttlin E.L."/>
            <person name="Jedrychowski M.P."/>
            <person name="Elias J.E."/>
            <person name="Goswami T."/>
            <person name="Rad R."/>
            <person name="Beausoleil S.A."/>
            <person name="Villen J."/>
            <person name="Haas W."/>
            <person name="Sowa M.E."/>
            <person name="Gygi S.P."/>
        </authorList>
    </citation>
    <scope>PHOSPHORYLATION [LARGE SCALE ANALYSIS] AT SER-119 AND THR-139</scope>
    <scope>IDENTIFICATION BY MASS SPECTROMETRY [LARGE SCALE ANALYSIS]</scope>
    <source>
        <tissue>Brain</tissue>
        <tissue>Brown adipose tissue</tissue>
        <tissue>Heart</tissue>
        <tissue>Kidney</tissue>
        <tissue>Liver</tissue>
        <tissue>Lung</tissue>
        <tissue>Pancreas</tissue>
        <tissue>Spleen</tissue>
        <tissue>Testis</tissue>
    </source>
</reference>
<reference key="4">
    <citation type="journal article" date="2013" name="Mol. Cell">
        <title>SIRT5-mediated lysine desuccinylation impacts diverse metabolic pathways.</title>
        <authorList>
            <person name="Park J."/>
            <person name="Chen Y."/>
            <person name="Tishkoff D.X."/>
            <person name="Peng C."/>
            <person name="Tan M."/>
            <person name="Dai L."/>
            <person name="Xie Z."/>
            <person name="Zhang Y."/>
            <person name="Zwaans B.M."/>
            <person name="Skinner M.E."/>
            <person name="Lombard D.B."/>
            <person name="Zhao Y."/>
        </authorList>
    </citation>
    <scope>ACETYLATION [LARGE SCALE ANALYSIS] AT LYS-64</scope>
    <scope>IDENTIFICATION BY MASS SPECTROMETRY [LARGE SCALE ANALYSIS]</scope>
    <source>
        <tissue>Embryonic fibroblast</tissue>
    </source>
</reference>
<feature type="initiator methionine" description="Removed" evidence="2">
    <location>
        <position position="1"/>
    </location>
</feature>
<feature type="chain" id="PRO_0000058254" description="PEST proteolytic signal-containing nuclear protein">
    <location>
        <begin position="2"/>
        <end position="178"/>
    </location>
</feature>
<feature type="region of interest" description="Disordered" evidence="3">
    <location>
        <begin position="1"/>
        <end position="82"/>
    </location>
</feature>
<feature type="region of interest" description="Disordered" evidence="3">
    <location>
        <begin position="134"/>
        <end position="158"/>
    </location>
</feature>
<feature type="compositionally biased region" description="Basic and acidic residues" evidence="3">
    <location>
        <begin position="1"/>
        <end position="15"/>
    </location>
</feature>
<feature type="compositionally biased region" description="Low complexity" evidence="3">
    <location>
        <begin position="37"/>
        <end position="47"/>
    </location>
</feature>
<feature type="compositionally biased region" description="Polar residues" evidence="3">
    <location>
        <begin position="139"/>
        <end position="149"/>
    </location>
</feature>
<feature type="modified residue" description="N-acetylalanine" evidence="2">
    <location>
        <position position="2"/>
    </location>
</feature>
<feature type="modified residue" description="Phosphoserine" evidence="2">
    <location>
        <position position="53"/>
    </location>
</feature>
<feature type="modified residue" description="N6-acetyllysine" evidence="6">
    <location>
        <position position="64"/>
    </location>
</feature>
<feature type="modified residue" description="Phosphoserine" evidence="2">
    <location>
        <position position="77"/>
    </location>
</feature>
<feature type="modified residue" description="Phosphoserine" evidence="2">
    <location>
        <position position="87"/>
    </location>
</feature>
<feature type="modified residue" description="Phosphoserine" evidence="4 5">
    <location>
        <position position="119"/>
    </location>
</feature>
<feature type="modified residue" description="Phosphothreonine" evidence="5">
    <location>
        <position position="139"/>
    </location>
</feature>
<feature type="modified residue" description="Phosphoserine" evidence="2">
    <location>
        <position position="147"/>
    </location>
</feature>
<feature type="modified residue" description="N6-acetyllysine" evidence="2">
    <location>
        <position position="150"/>
    </location>
</feature>
<feature type="modified residue" description="N6-acetyllysine" evidence="2">
    <location>
        <position position="152"/>
    </location>
</feature>
<accession>Q6P8I4</accession>
<proteinExistence type="evidence at protein level"/>
<evidence type="ECO:0000250" key="1"/>
<evidence type="ECO:0000250" key="2">
    <source>
        <dbReference type="UniProtKB" id="Q8WW12"/>
    </source>
</evidence>
<evidence type="ECO:0000256" key="3">
    <source>
        <dbReference type="SAM" id="MobiDB-lite"/>
    </source>
</evidence>
<evidence type="ECO:0007744" key="4">
    <source>
    </source>
</evidence>
<evidence type="ECO:0007744" key="5">
    <source>
    </source>
</evidence>
<evidence type="ECO:0007744" key="6">
    <source>
    </source>
</evidence>
<dbReference type="EMBL" id="BC061235">
    <property type="protein sequence ID" value="AAH61235.1"/>
    <property type="molecule type" value="mRNA"/>
</dbReference>
<dbReference type="CCDS" id="CCDS37357.1"/>
<dbReference type="RefSeq" id="NP_001019793.1">
    <property type="nucleotide sequence ID" value="NM_001024622.2"/>
</dbReference>
<dbReference type="BioGRID" id="218068">
    <property type="interactions" value="7"/>
</dbReference>
<dbReference type="FunCoup" id="Q6P8I4">
    <property type="interactions" value="4798"/>
</dbReference>
<dbReference type="STRING" id="10090.ENSMUSP00000110087"/>
<dbReference type="GlyGen" id="Q6P8I4">
    <property type="glycosylation" value="2 sites, 1 O-linked glycan (2 sites)"/>
</dbReference>
<dbReference type="iPTMnet" id="Q6P8I4"/>
<dbReference type="PhosphoSitePlus" id="Q6P8I4"/>
<dbReference type="jPOST" id="Q6P8I4"/>
<dbReference type="PaxDb" id="10090-ENSMUSP00000110087"/>
<dbReference type="ProteomicsDB" id="288076"/>
<dbReference type="Pumba" id="Q6P8I4"/>
<dbReference type="Antibodypedia" id="32287">
    <property type="antibodies" value="172 antibodies from 27 providers"/>
</dbReference>
<dbReference type="Ensembl" id="ENSMUST00000114444.9">
    <property type="protein sequence ID" value="ENSMUSP00000110087.3"/>
    <property type="gene ID" value="ENSMUSG00000071533.12"/>
</dbReference>
<dbReference type="GeneID" id="76302"/>
<dbReference type="KEGG" id="mmu:76302"/>
<dbReference type="UCSC" id="uc007zma.1">
    <property type="organism name" value="mouse"/>
</dbReference>
<dbReference type="AGR" id="MGI:1923552"/>
<dbReference type="CTD" id="57092"/>
<dbReference type="MGI" id="MGI:1923552">
    <property type="gene designation" value="Pcnp"/>
</dbReference>
<dbReference type="VEuPathDB" id="HostDB:ENSMUSG00000071533"/>
<dbReference type="eggNOG" id="ENOG502QWEZ">
    <property type="taxonomic scope" value="Eukaryota"/>
</dbReference>
<dbReference type="GeneTree" id="ENSGT00390000010218"/>
<dbReference type="HOGENOM" id="CLU_118645_1_0_1"/>
<dbReference type="InParanoid" id="Q6P8I4"/>
<dbReference type="OMA" id="EKDMMAD"/>
<dbReference type="PhylomeDB" id="Q6P8I4"/>
<dbReference type="TreeFam" id="TF333058"/>
<dbReference type="BioGRID-ORCS" id="76302">
    <property type="hits" value="9 hits in 73 CRISPR screens"/>
</dbReference>
<dbReference type="ChiTaRS" id="Pcnp">
    <property type="organism name" value="mouse"/>
</dbReference>
<dbReference type="PRO" id="PR:Q6P8I4"/>
<dbReference type="Proteomes" id="UP000000589">
    <property type="component" value="Chromosome 16"/>
</dbReference>
<dbReference type="RNAct" id="Q6P8I4">
    <property type="molecule type" value="protein"/>
</dbReference>
<dbReference type="Bgee" id="ENSMUSG00000071533">
    <property type="expression patterns" value="Expressed in ureter smooth muscle and 262 other cell types or tissues"/>
</dbReference>
<dbReference type="ExpressionAtlas" id="Q6P8I4">
    <property type="expression patterns" value="baseline and differential"/>
</dbReference>
<dbReference type="GO" id="GO:0005634">
    <property type="term" value="C:nucleus"/>
    <property type="evidence" value="ECO:0000250"/>
    <property type="project" value="HGNC-UCL"/>
</dbReference>
<dbReference type="GO" id="GO:0043161">
    <property type="term" value="P:proteasome-mediated ubiquitin-dependent protein catabolic process"/>
    <property type="evidence" value="ECO:0000250"/>
    <property type="project" value="HGNC-UCL"/>
</dbReference>
<dbReference type="GO" id="GO:0016567">
    <property type="term" value="P:protein ubiquitination"/>
    <property type="evidence" value="ECO:0000250"/>
    <property type="project" value="HGNC-UCL"/>
</dbReference>
<dbReference type="InterPro" id="IPR029169">
    <property type="entry name" value="PCNP"/>
</dbReference>
<dbReference type="PANTHER" id="PTHR16523">
    <property type="entry name" value="PEST PROTEOLYTIC SIGNAL-CONTAINING NUCLEAR PROTEIN"/>
    <property type="match status" value="1"/>
</dbReference>
<dbReference type="PANTHER" id="PTHR16523:SF6">
    <property type="entry name" value="PEST PROTEOLYTIC SIGNAL-CONTAINING NUCLEAR PROTEIN"/>
    <property type="match status" value="1"/>
</dbReference>
<dbReference type="Pfam" id="PF15473">
    <property type="entry name" value="PCNP"/>
    <property type="match status" value="1"/>
</dbReference>
<name>PCNP_MOUSE</name>
<keyword id="KW-0007">Acetylation</keyword>
<keyword id="KW-0131">Cell cycle</keyword>
<keyword id="KW-0539">Nucleus</keyword>
<keyword id="KW-0597">Phosphoprotein</keyword>
<keyword id="KW-1185">Reference proteome</keyword>
<keyword id="KW-0832">Ubl conjugation</keyword>
<comment type="function">
    <text evidence="1">May be involved in cell cycle regulation.</text>
</comment>
<comment type="subunit">
    <text evidence="1">Interacts with UHRF2/NIRF.</text>
</comment>
<comment type="subcellular location">
    <subcellularLocation>
        <location evidence="1">Nucleus</location>
    </subcellularLocation>
</comment>
<comment type="PTM">
    <text evidence="1">Ubiquitinated; mediated by UHRF2 and leading to its subsequent proteasomal degradation.</text>
</comment>
<comment type="PTM">
    <text evidence="1">N-terminally acetylated in a HYPK-dependent manner by the NatA acetyltransferase complex which is composed of NAA10 and NAA15.</text>
</comment>
<gene>
    <name type="primary">Pcnp</name>
</gene>
<organism>
    <name type="scientific">Mus musculus</name>
    <name type="common">Mouse</name>
    <dbReference type="NCBI Taxonomy" id="10090"/>
    <lineage>
        <taxon>Eukaryota</taxon>
        <taxon>Metazoa</taxon>
        <taxon>Chordata</taxon>
        <taxon>Craniata</taxon>
        <taxon>Vertebrata</taxon>
        <taxon>Euteleostomi</taxon>
        <taxon>Mammalia</taxon>
        <taxon>Eutheria</taxon>
        <taxon>Euarchontoglires</taxon>
        <taxon>Glires</taxon>
        <taxon>Rodentia</taxon>
        <taxon>Myomorpha</taxon>
        <taxon>Muroidea</taxon>
        <taxon>Muridae</taxon>
        <taxon>Murinae</taxon>
        <taxon>Mus</taxon>
        <taxon>Mus</taxon>
    </lineage>
</organism>